<feature type="chain" id="PRO_0000191332" description="Abnormal spindle-like microcephaly-associated protein">
    <location>
        <begin position="1"/>
        <end position="3477"/>
    </location>
</feature>
<feature type="domain" description="Calponin-homology (CH) 1" evidence="4">
    <location>
        <begin position="920"/>
        <end position="1056"/>
    </location>
</feature>
<feature type="domain" description="Calponin-homology (CH) 2" evidence="4">
    <location>
        <begin position="1110"/>
        <end position="1261"/>
    </location>
</feature>
<feature type="domain" description="IQ 1" evidence="5">
    <location>
        <begin position="1347"/>
        <end position="1378"/>
    </location>
</feature>
<feature type="domain" description="IQ 2" evidence="5">
    <location>
        <begin position="1393"/>
        <end position="1422"/>
    </location>
</feature>
<feature type="domain" description="IQ 3" evidence="5">
    <location>
        <begin position="1582"/>
        <end position="1613"/>
    </location>
</feature>
<feature type="domain" description="IQ 4" evidence="5">
    <location>
        <begin position="1632"/>
        <end position="1661"/>
    </location>
</feature>
<feature type="domain" description="IQ 5" evidence="5">
    <location>
        <begin position="1655"/>
        <end position="1684"/>
    </location>
</feature>
<feature type="domain" description="IQ 6" evidence="5">
    <location>
        <begin position="1728"/>
        <end position="1757"/>
    </location>
</feature>
<feature type="domain" description="IQ 7" evidence="5">
    <location>
        <begin position="1751"/>
        <end position="1782"/>
    </location>
</feature>
<feature type="domain" description="IQ 8" evidence="5">
    <location>
        <begin position="1801"/>
        <end position="1830"/>
    </location>
</feature>
<feature type="domain" description="IQ 9" evidence="5">
    <location>
        <begin position="1824"/>
        <end position="1853"/>
    </location>
</feature>
<feature type="domain" description="IQ 10" evidence="5">
    <location>
        <begin position="1874"/>
        <end position="1903"/>
    </location>
</feature>
<feature type="domain" description="IQ 11" evidence="5">
    <location>
        <begin position="1897"/>
        <end position="1928"/>
    </location>
</feature>
<feature type="domain" description="IQ 12" evidence="5">
    <location>
        <begin position="1947"/>
        <end position="1978"/>
    </location>
</feature>
<feature type="domain" description="IQ 13" evidence="5">
    <location>
        <begin position="1970"/>
        <end position="2001"/>
    </location>
</feature>
<feature type="domain" description="IQ 14" evidence="5">
    <location>
        <begin position="2020"/>
        <end position="2049"/>
    </location>
</feature>
<feature type="domain" description="IQ 15" evidence="5">
    <location>
        <begin position="2043"/>
        <end position="2074"/>
    </location>
</feature>
<feature type="domain" description="IQ 16" evidence="5">
    <location>
        <begin position="2093"/>
        <end position="2124"/>
    </location>
</feature>
<feature type="domain" description="IQ 17" evidence="5">
    <location>
        <begin position="2116"/>
        <end position="2147"/>
    </location>
</feature>
<feature type="domain" description="IQ 18" evidence="5">
    <location>
        <begin position="2166"/>
        <end position="2197"/>
    </location>
</feature>
<feature type="domain" description="IQ 19" evidence="5">
    <location>
        <begin position="2189"/>
        <end position="2218"/>
    </location>
</feature>
<feature type="domain" description="IQ 20" evidence="5">
    <location>
        <begin position="2239"/>
        <end position="2270"/>
    </location>
</feature>
<feature type="domain" description="IQ 21" evidence="5">
    <location>
        <begin position="2262"/>
        <end position="2293"/>
    </location>
</feature>
<feature type="domain" description="IQ 22" evidence="5">
    <location>
        <begin position="2311"/>
        <end position="2342"/>
    </location>
</feature>
<feature type="domain" description="IQ 23" evidence="5">
    <location>
        <begin position="2334"/>
        <end position="2365"/>
    </location>
</feature>
<feature type="domain" description="IQ 24" evidence="5">
    <location>
        <begin position="2384"/>
        <end position="2415"/>
    </location>
</feature>
<feature type="domain" description="IQ 25" evidence="5">
    <location>
        <begin position="2407"/>
        <end position="2438"/>
    </location>
</feature>
<feature type="domain" description="IQ 26" evidence="5">
    <location>
        <begin position="2457"/>
        <end position="2488"/>
    </location>
</feature>
<feature type="domain" description="IQ 27" evidence="5">
    <location>
        <begin position="2530"/>
        <end position="2561"/>
    </location>
</feature>
<feature type="domain" description="IQ 28" evidence="5">
    <location>
        <begin position="2624"/>
        <end position="2653"/>
    </location>
</feature>
<feature type="domain" description="IQ 29" evidence="5">
    <location>
        <begin position="2665"/>
        <end position="2696"/>
    </location>
</feature>
<feature type="domain" description="IQ 30" evidence="5">
    <location>
        <begin position="2688"/>
        <end position="2719"/>
    </location>
</feature>
<feature type="domain" description="IQ 31" evidence="5">
    <location>
        <begin position="2738"/>
        <end position="2767"/>
    </location>
</feature>
<feature type="domain" description="IQ 32" evidence="5">
    <location>
        <begin position="2859"/>
        <end position="2890"/>
    </location>
</feature>
<feature type="domain" description="IQ 33" evidence="5">
    <location>
        <begin position="2909"/>
        <end position="2938"/>
    </location>
</feature>
<feature type="domain" description="IQ 34" evidence="5">
    <location>
        <begin position="2932"/>
        <end position="2963"/>
    </location>
</feature>
<feature type="domain" description="IQ 35" evidence="5">
    <location>
        <begin position="2954"/>
        <end position="2985"/>
    </location>
</feature>
<feature type="domain" description="IQ 36" evidence="5">
    <location>
        <begin position="3029"/>
        <end position="3060"/>
    </location>
</feature>
<feature type="domain" description="IQ 37" evidence="5">
    <location>
        <begin position="3079"/>
        <end position="3110"/>
    </location>
</feature>
<feature type="domain" description="IQ 38" evidence="5">
    <location>
        <begin position="3181"/>
        <end position="3210"/>
    </location>
</feature>
<feature type="domain" description="IQ 39" evidence="5">
    <location>
        <begin position="3204"/>
        <end position="3235"/>
    </location>
</feature>
<feature type="region of interest" description="Disordered" evidence="6">
    <location>
        <begin position="1"/>
        <end position="30"/>
    </location>
</feature>
<feature type="region of interest" description="Sufficient for interaction with KATNA1:KATNB1" evidence="2">
    <location>
        <begin position="308"/>
        <end position="409"/>
    </location>
</feature>
<feature type="region of interest" description="Disordered" evidence="6">
    <location>
        <begin position="415"/>
        <end position="443"/>
    </location>
</feature>
<feature type="region of interest" description="Disordered" evidence="6">
    <location>
        <begin position="559"/>
        <end position="581"/>
    </location>
</feature>
<feature type="coiled-coil region" evidence="3">
    <location>
        <begin position="1057"/>
        <end position="1078"/>
    </location>
</feature>
<feature type="compositionally biased region" description="Polar residues" evidence="6">
    <location>
        <begin position="415"/>
        <end position="424"/>
    </location>
</feature>
<feature type="compositionally biased region" description="Polar residues" evidence="6">
    <location>
        <begin position="560"/>
        <end position="570"/>
    </location>
</feature>
<feature type="modified residue" description="Phosphoserine" evidence="21 24">
    <location>
        <position position="280"/>
    </location>
</feature>
<feature type="modified residue" description="Phosphoserine" evidence="21 24">
    <location>
        <position position="283"/>
    </location>
</feature>
<feature type="modified residue" description="Phosphoserine" evidence="23 25">
    <location>
        <position position="367"/>
    </location>
</feature>
<feature type="modified residue" description="Phosphoserine" evidence="22 23 24">
    <location>
        <position position="392"/>
    </location>
</feature>
<feature type="modified residue" description="Phosphoserine" evidence="20 21 25">
    <location>
        <position position="425"/>
    </location>
</feature>
<feature type="modified residue" description="Phosphoserine" evidence="25">
    <location>
        <position position="605"/>
    </location>
</feature>
<feature type="modified residue" description="Phosphoserine" evidence="21 25">
    <location>
        <position position="1103"/>
    </location>
</feature>
<feature type="splice variant" id="VSP_010680" description="In isoform 2." evidence="17 18">
    <location>
        <begin position="1356"/>
        <end position="2940"/>
    </location>
</feature>
<feature type="sequence variant" id="VAR_047263" description="In dbSNP:rs12025066.">
    <original>I</original>
    <variation>V</variation>
    <location>
        <position position="313"/>
    </location>
</feature>
<feature type="sequence variant" id="VAR_024369" description="In dbSNP:rs6428388.">
    <original>R</original>
    <variation>G</variation>
    <location>
        <position position="430"/>
    </location>
</feature>
<feature type="sequence variant" id="VAR_046758" description="In dbSNP:rs7551108.">
    <original>T</original>
    <variation>S</variation>
    <location>
        <position position="869"/>
    </location>
</feature>
<feature type="sequence variant" id="VAR_046759" description="In dbSNP:rs16841081." evidence="10">
    <original>S</original>
    <variation>F</variation>
    <location>
        <position position="1090"/>
    </location>
</feature>
<feature type="sequence variant" id="VAR_046760" description="In dbSNP:rs964201." evidence="7 9 12">
    <original>Y</original>
    <variation>H</variation>
    <location>
        <position position="2494"/>
    </location>
</feature>
<feature type="sequence variant" id="VAR_071930" description="In dbSNP:rs587783267." evidence="12">
    <original>N</original>
    <variation>D</variation>
    <location>
        <position position="2526"/>
    </location>
</feature>
<feature type="sequence variant" id="VAR_019084" description="In dbSNP:rs41310927." evidence="8">
    <original>S</original>
    <variation>G</variation>
    <location>
        <position position="2562"/>
    </location>
</feature>
<feature type="sequence variant" id="VAR_046761" description="In dbSNP:rs12138336.">
    <original>Q</original>
    <variation>H</variation>
    <location>
        <position position="2620"/>
    </location>
</feature>
<feature type="sequence variant" id="VAR_019085" description="In dbSNP:rs3762271." evidence="8 12 13">
    <original>L</original>
    <variation>I</variation>
    <location>
        <position position="2647"/>
    </location>
</feature>
<feature type="sequence variant" id="VAR_019086" description="In dbSNP:rs36004306." evidence="8">
    <original>L</original>
    <variation>R</variation>
    <location>
        <position position="3132"/>
    </location>
</feature>
<feature type="sequence variant" id="VAR_071931" description="In dbSNP:rs193251130." evidence="12 15">
    <original>Q</original>
    <variation>P</variation>
    <location>
        <position position="3180"/>
    </location>
</feature>
<feature type="sequence variant" id="VAR_046762" description="In dbSNP:rs7528827.">
    <original>H</original>
    <variation>R</variation>
    <location>
        <position position="3258"/>
    </location>
</feature>
<feature type="sequence conflict" description="In Ref. 1; AAN40011 and 2; AAR12641." evidence="19" ref="1 2">
    <original>Q</original>
    <variation>R</variation>
    <location>
        <position position="2355"/>
    </location>
</feature>
<feature type="sequence conflict" description="In Ref. 7; BAA91676." evidence="19" ref="7">
    <original>I</original>
    <variation>V</variation>
    <location>
        <position position="2977"/>
    </location>
</feature>
<feature type="sequence conflict" description="In Ref. 7; BAA91676." evidence="19" ref="7">
    <original>F</original>
    <variation>S</variation>
    <location>
        <position position="3049"/>
    </location>
</feature>
<evidence type="ECO:0000250" key="1"/>
<evidence type="ECO:0000250" key="2">
    <source>
        <dbReference type="UniProtKB" id="Q8CJ27"/>
    </source>
</evidence>
<evidence type="ECO:0000255" key="3"/>
<evidence type="ECO:0000255" key="4">
    <source>
        <dbReference type="PROSITE-ProRule" id="PRU00044"/>
    </source>
</evidence>
<evidence type="ECO:0000255" key="5">
    <source>
        <dbReference type="PROSITE-ProRule" id="PRU00116"/>
    </source>
</evidence>
<evidence type="ECO:0000256" key="6">
    <source>
        <dbReference type="SAM" id="MobiDB-lite"/>
    </source>
</evidence>
<evidence type="ECO:0000269" key="7">
    <source>
    </source>
</evidence>
<evidence type="ECO:0000269" key="8">
    <source>
    </source>
</evidence>
<evidence type="ECO:0000269" key="9">
    <source>
    </source>
</evidence>
<evidence type="ECO:0000269" key="10">
    <source>
    </source>
</evidence>
<evidence type="ECO:0000269" key="11">
    <source>
    </source>
</evidence>
<evidence type="ECO:0000269" key="12">
    <source>
    </source>
</evidence>
<evidence type="ECO:0000269" key="13">
    <source>
    </source>
</evidence>
<evidence type="ECO:0000269" key="14">
    <source>
    </source>
</evidence>
<evidence type="ECO:0000269" key="15">
    <source>
    </source>
</evidence>
<evidence type="ECO:0000269" key="16">
    <source>
    </source>
</evidence>
<evidence type="ECO:0000303" key="17">
    <source>
    </source>
</evidence>
<evidence type="ECO:0000303" key="18">
    <source>
    </source>
</evidence>
<evidence type="ECO:0000305" key="19"/>
<evidence type="ECO:0007744" key="20">
    <source>
    </source>
</evidence>
<evidence type="ECO:0007744" key="21">
    <source>
    </source>
</evidence>
<evidence type="ECO:0007744" key="22">
    <source>
    </source>
</evidence>
<evidence type="ECO:0007744" key="23">
    <source>
    </source>
</evidence>
<evidence type="ECO:0007744" key="24">
    <source>
    </source>
</evidence>
<evidence type="ECO:0007744" key="25">
    <source>
    </source>
</evidence>
<proteinExistence type="evidence at protein level"/>
<keyword id="KW-0025">Alternative splicing</keyword>
<keyword id="KW-0112">Calmodulin-binding</keyword>
<keyword id="KW-0131">Cell cycle</keyword>
<keyword id="KW-0132">Cell division</keyword>
<keyword id="KW-0175">Coiled coil</keyword>
<keyword id="KW-0963">Cytoplasm</keyword>
<keyword id="KW-0206">Cytoskeleton</keyword>
<keyword id="KW-0225">Disease variant</keyword>
<keyword id="KW-0991">Intellectual disability</keyword>
<keyword id="KW-0498">Mitosis</keyword>
<keyword id="KW-0539">Nucleus</keyword>
<keyword id="KW-0597">Phosphoprotein</keyword>
<keyword id="KW-0905">Primary microcephaly</keyword>
<keyword id="KW-1267">Proteomics identification</keyword>
<keyword id="KW-1185">Reference proteome</keyword>
<keyword id="KW-0677">Repeat</keyword>
<reference key="1">
    <citation type="journal article" date="2002" name="Nat. Genet.">
        <title>ASPM is a major determinant of cerebral cortical size.</title>
        <authorList>
            <person name="Bond J."/>
            <person name="Roberts E."/>
            <person name="Mochida G.H."/>
            <person name="Hampshire D.J."/>
            <person name="Scott S."/>
            <person name="Askham J.M."/>
            <person name="Springell K."/>
            <person name="Mahadevan M."/>
            <person name="Crow Y.J."/>
            <person name="Markham A.F."/>
            <person name="Walsh C.A."/>
            <person name="Woods C.G."/>
        </authorList>
    </citation>
    <scope>NUCLEOTIDE SEQUENCE [MRNA] (ISOFORM 1)</scope>
    <scope>FUNCTION</scope>
    <scope>INVOLVEMENT IN MCPH5</scope>
    <scope>VARIANT HIS-2494</scope>
    <source>
        <tissue>Colon adenocarcinoma</tissue>
        <tissue>Fetal brain</tissue>
    </source>
</reference>
<reference key="2">
    <citation type="journal article" date="2003" name="Genetics">
        <title>Evolution of the human ASPM gene, a major determinant of brain size.</title>
        <authorList>
            <person name="Zhang J."/>
        </authorList>
    </citation>
    <scope>NUCLEOTIDE SEQUENCE [MRNA] (ISOFORM 1)</scope>
    <scope>VARIANT HIS-2494</scope>
</reference>
<reference key="3">
    <citation type="journal article" date="2005" name="Hum. Mol. Genet.">
        <title>The microcephaly ASPM gene is expressed in proliferating tissues and encodes for a mitotic spindle protein.</title>
        <authorList>
            <person name="Kouprina N."/>
            <person name="Pavlicek A."/>
            <person name="Collins N.K."/>
            <person name="Nakano M."/>
            <person name="Noskov V.N."/>
            <person name="Ohzeki J.I."/>
            <person name="Mochida G.H."/>
            <person name="Risinger J.I."/>
            <person name="Goldsmith P."/>
            <person name="Gunsior M."/>
            <person name="Solomon G."/>
            <person name="Gersch W."/>
            <person name="Kim J.H."/>
            <person name="Barrett J.C."/>
            <person name="Walsh C.A."/>
            <person name="Jurka J."/>
            <person name="Masumoto H."/>
            <person name="Larionov V."/>
        </authorList>
    </citation>
    <scope>NUCLEOTIDE SEQUENCE [MRNA] (ISOFORM 2)</scope>
    <scope>FUNCTION</scope>
    <scope>ALTERNATIVE SPLICING</scope>
    <scope>SUBCELLULAR LOCATION</scope>
</reference>
<reference key="4">
    <citation type="journal article" date="2006" name="Nature">
        <title>The DNA sequence and biological annotation of human chromosome 1.</title>
        <authorList>
            <person name="Gregory S.G."/>
            <person name="Barlow K.F."/>
            <person name="McLay K.E."/>
            <person name="Kaul R."/>
            <person name="Swarbreck D."/>
            <person name="Dunham A."/>
            <person name="Scott C.E."/>
            <person name="Howe K.L."/>
            <person name="Woodfine K."/>
            <person name="Spencer C.C.A."/>
            <person name="Jones M.C."/>
            <person name="Gillson C."/>
            <person name="Searle S."/>
            <person name="Zhou Y."/>
            <person name="Kokocinski F."/>
            <person name="McDonald L."/>
            <person name="Evans R."/>
            <person name="Phillips K."/>
            <person name="Atkinson A."/>
            <person name="Cooper R."/>
            <person name="Jones C."/>
            <person name="Hall R.E."/>
            <person name="Andrews T.D."/>
            <person name="Lloyd C."/>
            <person name="Ainscough R."/>
            <person name="Almeida J.P."/>
            <person name="Ambrose K.D."/>
            <person name="Anderson F."/>
            <person name="Andrew R.W."/>
            <person name="Ashwell R.I.S."/>
            <person name="Aubin K."/>
            <person name="Babbage A.K."/>
            <person name="Bagguley C.L."/>
            <person name="Bailey J."/>
            <person name="Beasley H."/>
            <person name="Bethel G."/>
            <person name="Bird C.P."/>
            <person name="Bray-Allen S."/>
            <person name="Brown J.Y."/>
            <person name="Brown A.J."/>
            <person name="Buckley D."/>
            <person name="Burton J."/>
            <person name="Bye J."/>
            <person name="Carder C."/>
            <person name="Chapman J.C."/>
            <person name="Clark S.Y."/>
            <person name="Clarke G."/>
            <person name="Clee C."/>
            <person name="Cobley V."/>
            <person name="Collier R.E."/>
            <person name="Corby N."/>
            <person name="Coville G.J."/>
            <person name="Davies J."/>
            <person name="Deadman R."/>
            <person name="Dunn M."/>
            <person name="Earthrowl M."/>
            <person name="Ellington A.G."/>
            <person name="Errington H."/>
            <person name="Frankish A."/>
            <person name="Frankland J."/>
            <person name="French L."/>
            <person name="Garner P."/>
            <person name="Garnett J."/>
            <person name="Gay L."/>
            <person name="Ghori M.R.J."/>
            <person name="Gibson R."/>
            <person name="Gilby L.M."/>
            <person name="Gillett W."/>
            <person name="Glithero R.J."/>
            <person name="Grafham D.V."/>
            <person name="Griffiths C."/>
            <person name="Griffiths-Jones S."/>
            <person name="Grocock R."/>
            <person name="Hammond S."/>
            <person name="Harrison E.S.I."/>
            <person name="Hart E."/>
            <person name="Haugen E."/>
            <person name="Heath P.D."/>
            <person name="Holmes S."/>
            <person name="Holt K."/>
            <person name="Howden P.J."/>
            <person name="Hunt A.R."/>
            <person name="Hunt S.E."/>
            <person name="Hunter G."/>
            <person name="Isherwood J."/>
            <person name="James R."/>
            <person name="Johnson C."/>
            <person name="Johnson D."/>
            <person name="Joy A."/>
            <person name="Kay M."/>
            <person name="Kershaw J.K."/>
            <person name="Kibukawa M."/>
            <person name="Kimberley A.M."/>
            <person name="King A."/>
            <person name="Knights A.J."/>
            <person name="Lad H."/>
            <person name="Laird G."/>
            <person name="Lawlor S."/>
            <person name="Leongamornlert D.A."/>
            <person name="Lloyd D.M."/>
            <person name="Loveland J."/>
            <person name="Lovell J."/>
            <person name="Lush M.J."/>
            <person name="Lyne R."/>
            <person name="Martin S."/>
            <person name="Mashreghi-Mohammadi M."/>
            <person name="Matthews L."/>
            <person name="Matthews N.S.W."/>
            <person name="McLaren S."/>
            <person name="Milne S."/>
            <person name="Mistry S."/>
            <person name="Moore M.J.F."/>
            <person name="Nickerson T."/>
            <person name="O'Dell C.N."/>
            <person name="Oliver K."/>
            <person name="Palmeiri A."/>
            <person name="Palmer S.A."/>
            <person name="Parker A."/>
            <person name="Patel D."/>
            <person name="Pearce A.V."/>
            <person name="Peck A.I."/>
            <person name="Pelan S."/>
            <person name="Phelps K."/>
            <person name="Phillimore B.J."/>
            <person name="Plumb R."/>
            <person name="Rajan J."/>
            <person name="Raymond C."/>
            <person name="Rouse G."/>
            <person name="Saenphimmachak C."/>
            <person name="Sehra H.K."/>
            <person name="Sheridan E."/>
            <person name="Shownkeen R."/>
            <person name="Sims S."/>
            <person name="Skuce C.D."/>
            <person name="Smith M."/>
            <person name="Steward C."/>
            <person name="Subramanian S."/>
            <person name="Sycamore N."/>
            <person name="Tracey A."/>
            <person name="Tromans A."/>
            <person name="Van Helmond Z."/>
            <person name="Wall M."/>
            <person name="Wallis J.M."/>
            <person name="White S."/>
            <person name="Whitehead S.L."/>
            <person name="Wilkinson J.E."/>
            <person name="Willey D.L."/>
            <person name="Williams H."/>
            <person name="Wilming L."/>
            <person name="Wray P.W."/>
            <person name="Wu Z."/>
            <person name="Coulson A."/>
            <person name="Vaudin M."/>
            <person name="Sulston J.E."/>
            <person name="Durbin R.M."/>
            <person name="Hubbard T."/>
            <person name="Wooster R."/>
            <person name="Dunham I."/>
            <person name="Carter N.P."/>
            <person name="McVean G."/>
            <person name="Ross M.T."/>
            <person name="Harrow J."/>
            <person name="Olson M.V."/>
            <person name="Beck S."/>
            <person name="Rogers J."/>
            <person name="Bentley D.R."/>
        </authorList>
    </citation>
    <scope>NUCLEOTIDE SEQUENCE [LARGE SCALE GENOMIC DNA]</scope>
</reference>
<reference key="5">
    <citation type="submission" date="2005-07" db="EMBL/GenBank/DDBJ databases">
        <authorList>
            <person name="Mural R.J."/>
            <person name="Istrail S."/>
            <person name="Sutton G.G."/>
            <person name="Florea L."/>
            <person name="Halpern A.L."/>
            <person name="Mobarry C.M."/>
            <person name="Lippert R."/>
            <person name="Walenz B."/>
            <person name="Shatkay H."/>
            <person name="Dew I."/>
            <person name="Miller J.R."/>
            <person name="Flanigan M.J."/>
            <person name="Edwards N.J."/>
            <person name="Bolanos R."/>
            <person name="Fasulo D."/>
            <person name="Halldorsson B.V."/>
            <person name="Hannenhalli S."/>
            <person name="Turner R."/>
            <person name="Yooseph S."/>
            <person name="Lu F."/>
            <person name="Nusskern D.R."/>
            <person name="Shue B.C."/>
            <person name="Zheng X.H."/>
            <person name="Zhong F."/>
            <person name="Delcher A.L."/>
            <person name="Huson D.H."/>
            <person name="Kravitz S.A."/>
            <person name="Mouchard L."/>
            <person name="Reinert K."/>
            <person name="Remington K.A."/>
            <person name="Clark A.G."/>
            <person name="Waterman M.S."/>
            <person name="Eichler E.E."/>
            <person name="Adams M.D."/>
            <person name="Hunkapiller M.W."/>
            <person name="Myers E.W."/>
            <person name="Venter J.C."/>
        </authorList>
    </citation>
    <scope>NUCLEOTIDE SEQUENCE [LARGE SCALE GENOMIC DNA]</scope>
</reference>
<reference key="6">
    <citation type="journal article" date="2004" name="Genome Res.">
        <title>The status, quality, and expansion of the NIH full-length cDNA project: the Mammalian Gene Collection (MGC).</title>
        <authorList>
            <consortium name="The MGC Project Team"/>
        </authorList>
    </citation>
    <scope>NUCLEOTIDE SEQUENCE [LARGE SCALE MRNA] OF 1-147 AND 709-3477 (ISOFORM 2)</scope>
    <scope>VARIANT PHE-1090</scope>
    <source>
        <tissue>Kidney</tissue>
        <tissue>Lymph</tissue>
    </source>
</reference>
<reference key="7">
    <citation type="journal article" date="2004" name="Nat. Genet.">
        <title>Complete sequencing and characterization of 21,243 full-length human cDNAs.</title>
        <authorList>
            <person name="Ota T."/>
            <person name="Suzuki Y."/>
            <person name="Nishikawa T."/>
            <person name="Otsuki T."/>
            <person name="Sugiyama T."/>
            <person name="Irie R."/>
            <person name="Wakamatsu A."/>
            <person name="Hayashi K."/>
            <person name="Sato H."/>
            <person name="Nagai K."/>
            <person name="Kimura K."/>
            <person name="Makita H."/>
            <person name="Sekine M."/>
            <person name="Obayashi M."/>
            <person name="Nishi T."/>
            <person name="Shibahara T."/>
            <person name="Tanaka T."/>
            <person name="Ishii S."/>
            <person name="Yamamoto J."/>
            <person name="Saito K."/>
            <person name="Kawai Y."/>
            <person name="Isono Y."/>
            <person name="Nakamura Y."/>
            <person name="Nagahari K."/>
            <person name="Murakami K."/>
            <person name="Yasuda T."/>
            <person name="Iwayanagi T."/>
            <person name="Wagatsuma M."/>
            <person name="Shiratori A."/>
            <person name="Sudo H."/>
            <person name="Hosoiri T."/>
            <person name="Kaku Y."/>
            <person name="Kodaira H."/>
            <person name="Kondo H."/>
            <person name="Sugawara M."/>
            <person name="Takahashi M."/>
            <person name="Kanda K."/>
            <person name="Yokoi T."/>
            <person name="Furuya T."/>
            <person name="Kikkawa E."/>
            <person name="Omura Y."/>
            <person name="Abe K."/>
            <person name="Kamihara K."/>
            <person name="Katsuta N."/>
            <person name="Sato K."/>
            <person name="Tanikawa M."/>
            <person name="Yamazaki M."/>
            <person name="Ninomiya K."/>
            <person name="Ishibashi T."/>
            <person name="Yamashita H."/>
            <person name="Murakawa K."/>
            <person name="Fujimori K."/>
            <person name="Tanai H."/>
            <person name="Kimata M."/>
            <person name="Watanabe M."/>
            <person name="Hiraoka S."/>
            <person name="Chiba Y."/>
            <person name="Ishida S."/>
            <person name="Ono Y."/>
            <person name="Takiguchi S."/>
            <person name="Watanabe S."/>
            <person name="Yosida M."/>
            <person name="Hotuta T."/>
            <person name="Kusano J."/>
            <person name="Kanehori K."/>
            <person name="Takahashi-Fujii A."/>
            <person name="Hara H."/>
            <person name="Tanase T.-O."/>
            <person name="Nomura Y."/>
            <person name="Togiya S."/>
            <person name="Komai F."/>
            <person name="Hara R."/>
            <person name="Takeuchi K."/>
            <person name="Arita M."/>
            <person name="Imose N."/>
            <person name="Musashino K."/>
            <person name="Yuuki H."/>
            <person name="Oshima A."/>
            <person name="Sasaki N."/>
            <person name="Aotsuka S."/>
            <person name="Yoshikawa Y."/>
            <person name="Matsunawa H."/>
            <person name="Ichihara T."/>
            <person name="Shiohata N."/>
            <person name="Sano S."/>
            <person name="Moriya S."/>
            <person name="Momiyama H."/>
            <person name="Satoh N."/>
            <person name="Takami S."/>
            <person name="Terashima Y."/>
            <person name="Suzuki O."/>
            <person name="Nakagawa S."/>
            <person name="Senoh A."/>
            <person name="Mizoguchi H."/>
            <person name="Goto Y."/>
            <person name="Shimizu F."/>
            <person name="Wakebe H."/>
            <person name="Hishigaki H."/>
            <person name="Watanabe T."/>
            <person name="Sugiyama A."/>
            <person name="Takemoto M."/>
            <person name="Kawakami B."/>
            <person name="Yamazaki M."/>
            <person name="Watanabe K."/>
            <person name="Kumagai A."/>
            <person name="Itakura S."/>
            <person name="Fukuzumi Y."/>
            <person name="Fujimori Y."/>
            <person name="Komiyama M."/>
            <person name="Tashiro H."/>
            <person name="Tanigami A."/>
            <person name="Fujiwara T."/>
            <person name="Ono T."/>
            <person name="Yamada K."/>
            <person name="Fujii Y."/>
            <person name="Ozaki K."/>
            <person name="Hirao M."/>
            <person name="Ohmori Y."/>
            <person name="Kawabata A."/>
            <person name="Hikiji T."/>
            <person name="Kobatake N."/>
            <person name="Inagaki H."/>
            <person name="Ikema Y."/>
            <person name="Okamoto S."/>
            <person name="Okitani R."/>
            <person name="Kawakami T."/>
            <person name="Noguchi S."/>
            <person name="Itoh T."/>
            <person name="Shigeta K."/>
            <person name="Senba T."/>
            <person name="Matsumura K."/>
            <person name="Nakajima Y."/>
            <person name="Mizuno T."/>
            <person name="Morinaga M."/>
            <person name="Sasaki M."/>
            <person name="Togashi T."/>
            <person name="Oyama M."/>
            <person name="Hata H."/>
            <person name="Watanabe M."/>
            <person name="Komatsu T."/>
            <person name="Mizushima-Sugano J."/>
            <person name="Satoh T."/>
            <person name="Shirai Y."/>
            <person name="Takahashi Y."/>
            <person name="Nakagawa K."/>
            <person name="Okumura K."/>
            <person name="Nagase T."/>
            <person name="Nomura N."/>
            <person name="Kikuchi H."/>
            <person name="Masuho Y."/>
            <person name="Yamashita R."/>
            <person name="Nakai K."/>
            <person name="Yada T."/>
            <person name="Nakamura Y."/>
            <person name="Ohara O."/>
            <person name="Isogai T."/>
            <person name="Sugano S."/>
        </authorList>
    </citation>
    <scope>NUCLEOTIDE SEQUENCE [LARGE SCALE MRNA] OF 2740-3477 (ISOFORM 1)</scope>
</reference>
<reference key="8">
    <citation type="journal article" date="2003" name="Am. J. Hum. Genet.">
        <title>Protein-truncating mutations in ASPM cause variable reduction in brain size.</title>
        <authorList>
            <person name="Bond J."/>
            <person name="Scott S."/>
            <person name="Hampshire D.J."/>
            <person name="Springell K."/>
            <person name="Corry P."/>
            <person name="Abramowicz M.J."/>
            <person name="Mochida G.H."/>
            <person name="Hennekam R.C.M."/>
            <person name="Maher E.R."/>
            <person name="Fryns J.-P."/>
            <person name="Alswaid A."/>
            <person name="Jafri H."/>
            <person name="Rashid Y."/>
            <person name="Mubaidin A."/>
            <person name="Walsh C.A."/>
            <person name="Roberts E."/>
            <person name="Woods C.G."/>
        </authorList>
    </citation>
    <scope>INVOLVEMENT IN MCPH5</scope>
    <scope>VARIANTS GLY-2562; ILE-2647 AND ARG-3132</scope>
</reference>
<reference key="9">
    <citation type="journal article" date="2006" name="Cell">
        <title>Global, in vivo, and site-specific phosphorylation dynamics in signaling networks.</title>
        <authorList>
            <person name="Olsen J.V."/>
            <person name="Blagoev B."/>
            <person name="Gnad F."/>
            <person name="Macek B."/>
            <person name="Kumar C."/>
            <person name="Mortensen P."/>
            <person name="Mann M."/>
        </authorList>
    </citation>
    <scope>PHOSPHORYLATION [LARGE SCALE ANALYSIS] AT SER-425</scope>
    <scope>IDENTIFICATION BY MASS SPECTROMETRY [LARGE SCALE ANALYSIS]</scope>
    <source>
        <tissue>Cervix carcinoma</tissue>
    </source>
</reference>
<reference key="10">
    <citation type="journal article" date="2008" name="Mol. Cell">
        <title>Kinase-selective enrichment enables quantitative phosphoproteomics of the kinome across the cell cycle.</title>
        <authorList>
            <person name="Daub H."/>
            <person name="Olsen J.V."/>
            <person name="Bairlein M."/>
            <person name="Gnad F."/>
            <person name="Oppermann F.S."/>
            <person name="Korner R."/>
            <person name="Greff Z."/>
            <person name="Keri G."/>
            <person name="Stemmann O."/>
            <person name="Mann M."/>
        </authorList>
    </citation>
    <scope>PHOSPHORYLATION [LARGE SCALE ANALYSIS] AT SER-392</scope>
    <scope>IDENTIFICATION BY MASS SPECTROMETRY [LARGE SCALE ANALYSIS]</scope>
    <source>
        <tissue>Cervix carcinoma</tissue>
    </source>
</reference>
<reference key="11">
    <citation type="journal article" date="2008" name="Proc. Natl. Acad. Sci. U.S.A.">
        <title>A quantitative atlas of mitotic phosphorylation.</title>
        <authorList>
            <person name="Dephoure N."/>
            <person name="Zhou C."/>
            <person name="Villen J."/>
            <person name="Beausoleil S.A."/>
            <person name="Bakalarski C.E."/>
            <person name="Elledge S.J."/>
            <person name="Gygi S.P."/>
        </authorList>
    </citation>
    <scope>PHOSPHORYLATION [LARGE SCALE ANALYSIS] AT SER-280; SER-283; SER-425 AND SER-1103</scope>
    <scope>IDENTIFICATION BY MASS SPECTROMETRY [LARGE SCALE ANALYSIS]</scope>
    <source>
        <tissue>Cervix carcinoma</tissue>
    </source>
</reference>
<reference key="12">
    <citation type="journal article" date="2009" name="Sci. Signal.">
        <title>Quantitative phosphoproteomic analysis of T cell receptor signaling reveals system-wide modulation of protein-protein interactions.</title>
        <authorList>
            <person name="Mayya V."/>
            <person name="Lundgren D.H."/>
            <person name="Hwang S.-I."/>
            <person name="Rezaul K."/>
            <person name="Wu L."/>
            <person name="Eng J.K."/>
            <person name="Rodionov V."/>
            <person name="Han D.K."/>
        </authorList>
    </citation>
    <scope>PHOSPHORYLATION [LARGE SCALE ANALYSIS] AT SER-367 AND SER-392</scope>
    <scope>IDENTIFICATION BY MASS SPECTROMETRY [LARGE SCALE ANALYSIS]</scope>
    <source>
        <tissue>Leukemic T-cell</tissue>
    </source>
</reference>
<reference key="13">
    <citation type="journal article" date="2010" name="Sci. Signal.">
        <title>Quantitative phosphoproteomics reveals widespread full phosphorylation site occupancy during mitosis.</title>
        <authorList>
            <person name="Olsen J.V."/>
            <person name="Vermeulen M."/>
            <person name="Santamaria A."/>
            <person name="Kumar C."/>
            <person name="Miller M.L."/>
            <person name="Jensen L.J."/>
            <person name="Gnad F."/>
            <person name="Cox J."/>
            <person name="Jensen T.S."/>
            <person name="Nigg E.A."/>
            <person name="Brunak S."/>
            <person name="Mann M."/>
        </authorList>
    </citation>
    <scope>PHOSPHORYLATION [LARGE SCALE ANALYSIS] AT SER-280; SER-283 AND SER-392</scope>
    <scope>IDENTIFICATION BY MASS SPECTROMETRY [LARGE SCALE ANALYSIS]</scope>
    <source>
        <tissue>Cervix carcinoma</tissue>
    </source>
</reference>
<reference key="14">
    <citation type="journal article" date="2013" name="Clin. Genet.">
        <title>Investigation of primary microcephaly in Bushehr province of Iran: novel STIL and ASPM mutations.</title>
        <authorList>
            <person name="Papari E."/>
            <person name="Bastami M."/>
            <person name="Farhadi A."/>
            <person name="Abedini S.S."/>
            <person name="Hosseini M."/>
            <person name="Bahman I."/>
            <person name="Mohseni M."/>
            <person name="Garshasbi M."/>
            <person name="Moheb L.A."/>
            <person name="Behjati F."/>
            <person name="Kahrizi K."/>
            <person name="Ropers H.H."/>
            <person name="Najmabadi H."/>
        </authorList>
    </citation>
    <scope>INVOLVEMENT IN MCPH5</scope>
</reference>
<reference key="15">
    <citation type="journal article" date="2013" name="J. Proteome Res.">
        <title>Toward a comprehensive characterization of a human cancer cell phosphoproteome.</title>
        <authorList>
            <person name="Zhou H."/>
            <person name="Di Palma S."/>
            <person name="Preisinger C."/>
            <person name="Peng M."/>
            <person name="Polat A.N."/>
            <person name="Heck A.J."/>
            <person name="Mohammed S."/>
        </authorList>
    </citation>
    <scope>PHOSPHORYLATION [LARGE SCALE ANALYSIS] AT SER-367; SER-425; SER-605 AND SER-1103</scope>
    <scope>IDENTIFICATION BY MASS SPECTROMETRY [LARGE SCALE ANALYSIS]</scope>
    <source>
        <tissue>Cervix carcinoma</tissue>
        <tissue>Erythroleukemia</tissue>
    </source>
</reference>
<reference key="16">
    <citation type="journal article" date="2017" name="Nat. Cell Biol.">
        <title>Microtubule minus-end regulation at spindle poles by an ASPM-katanin complex.</title>
        <authorList>
            <person name="Jiang K."/>
            <person name="Rezabkova L."/>
            <person name="Hua S."/>
            <person name="Liu Q."/>
            <person name="Capitani G."/>
            <person name="Maarten Altelaar A.F."/>
            <person name="Heck A.J.R."/>
            <person name="Kammerer R.A."/>
            <person name="Steinmetz M.O."/>
            <person name="Akhmanova A."/>
        </authorList>
    </citation>
    <scope>FUNCTION</scope>
    <scope>INTERACTION WITH KATNA1 AND KATNB1</scope>
    <scope>SUBCELLULAR LOCATION</scope>
</reference>
<reference key="17">
    <citation type="journal article" date="2006" name="Neurogenetics">
        <title>Genetic studies of autosomal recessive primary microcephaly in 33 Pakistani families: Novel sequence variants in ASPM gene.</title>
        <authorList>
            <person name="Gul A."/>
            <person name="Hassan M.J."/>
            <person name="Mahmood S."/>
            <person name="Chen W."/>
            <person name="Rahmani S."/>
            <person name="Naseer M.I."/>
            <person name="Dellefave L."/>
            <person name="Muhammad N."/>
            <person name="Rafiq M.A."/>
            <person name="Ansar M."/>
            <person name="Chishti M.S."/>
            <person name="Ali G."/>
            <person name="Siddique T."/>
            <person name="Ahmad W."/>
        </authorList>
    </citation>
    <scope>VARIANTS HIS-2494; ASP-2526; ILE-2647 AND PRO-3180</scope>
</reference>
<reference key="18">
    <citation type="journal article" date="2008" name="Hum. Mol. Genet.">
        <title>A common SNP of MCPH1 is associated with cranial volume variation in Chinese population.</title>
        <authorList>
            <person name="Wang J.-K."/>
            <person name="Li Y."/>
            <person name="Su B."/>
        </authorList>
    </citation>
    <scope>VARIANT ILE-2647</scope>
</reference>
<reference key="19">
    <citation type="journal article" date="2016" name="Nature">
        <title>Analysis of protein-coding genetic variation in 60,706 humans.</title>
        <authorList>
            <consortium name="Exome Aggregation Consortium"/>
            <person name="Lek M."/>
            <person name="Karczewski K.J."/>
            <person name="Minikel E.V."/>
            <person name="Samocha K.E."/>
            <person name="Banks E."/>
            <person name="Fennell T."/>
            <person name="O'Donnell-Luria A.H."/>
            <person name="Ware J.S."/>
            <person name="Hill A.J."/>
            <person name="Cummings B.B."/>
            <person name="Tukiainen T."/>
            <person name="Birnbaum D.P."/>
            <person name="Kosmicki J.A."/>
            <person name="Duncan L.E."/>
            <person name="Estrada K."/>
            <person name="Zhao F."/>
            <person name="Zou J."/>
            <person name="Pierce-Hoffman E."/>
            <person name="Berghout J."/>
            <person name="Cooper D.N."/>
            <person name="Deflaux N."/>
            <person name="DePristo M."/>
            <person name="Do R."/>
            <person name="Flannick J."/>
            <person name="Fromer M."/>
            <person name="Gauthier L."/>
            <person name="Goldstein J."/>
            <person name="Gupta N."/>
            <person name="Howrigan D."/>
            <person name="Kiezun A."/>
            <person name="Kurki M.I."/>
            <person name="Moonshine A.L."/>
            <person name="Natarajan P."/>
            <person name="Orozco L."/>
            <person name="Peloso G.M."/>
            <person name="Poplin R."/>
            <person name="Rivas M.A."/>
            <person name="Ruano-Rubio V."/>
            <person name="Rose S.A."/>
            <person name="Ruderfer D.M."/>
            <person name="Shakir K."/>
            <person name="Stenson P.D."/>
            <person name="Stevens C."/>
            <person name="Thomas B.P."/>
            <person name="Tiao G."/>
            <person name="Tusie-Luna M.T."/>
            <person name="Weisburd B."/>
            <person name="Won H.H."/>
            <person name="Yu D."/>
            <person name="Altshuler D.M."/>
            <person name="Ardissino D."/>
            <person name="Boehnke M."/>
            <person name="Danesh J."/>
            <person name="Donnelly S."/>
            <person name="Elosua R."/>
            <person name="Florez J.C."/>
            <person name="Gabriel S.B."/>
            <person name="Getz G."/>
            <person name="Glatt S.J."/>
            <person name="Hultman C.M."/>
            <person name="Kathiresan S."/>
            <person name="Laakso M."/>
            <person name="McCarroll S."/>
            <person name="McCarthy M.I."/>
            <person name="McGovern D."/>
            <person name="McPherson R."/>
            <person name="Neale B.M."/>
            <person name="Palotie A."/>
            <person name="Purcell S.M."/>
            <person name="Saleheen D."/>
            <person name="Scharf J.M."/>
            <person name="Sklar P."/>
            <person name="Sullivan P.F."/>
            <person name="Tuomilehto J."/>
            <person name="Tsuang M.T."/>
            <person name="Watkins H.C."/>
            <person name="Wilson J.G."/>
            <person name="Daly M.J."/>
            <person name="MacArthur D.G."/>
        </authorList>
    </citation>
    <scope>VARIANT PRO-3180</scope>
</reference>
<dbReference type="EMBL" id="AF509326">
    <property type="protein sequence ID" value="AAN40011.1"/>
    <property type="molecule type" value="mRNA"/>
</dbReference>
<dbReference type="EMBL" id="AY099890">
    <property type="protein sequence ID" value="AAM44119.1"/>
    <property type="molecule type" value="mRNA"/>
</dbReference>
<dbReference type="EMBL" id="AY099891">
    <property type="protein sequence ID" value="AAM44120.1"/>
    <property type="molecule type" value="mRNA"/>
</dbReference>
<dbReference type="EMBL" id="AY099892">
    <property type="protein sequence ID" value="AAM44121.1"/>
    <property type="molecule type" value="mRNA"/>
</dbReference>
<dbReference type="EMBL" id="AY099893">
    <property type="protein sequence ID" value="AAM44122.1"/>
    <property type="molecule type" value="mRNA"/>
</dbReference>
<dbReference type="EMBL" id="AY101201">
    <property type="protein sequence ID" value="AAM48745.1"/>
    <property type="molecule type" value="mRNA"/>
</dbReference>
<dbReference type="EMBL" id="AY367065">
    <property type="protein sequence ID" value="AAR12641.1"/>
    <property type="molecule type" value="mRNA"/>
</dbReference>
<dbReference type="EMBL" id="AY971956">
    <property type="protein sequence ID" value="AAY46814.1"/>
    <property type="molecule type" value="mRNA"/>
</dbReference>
<dbReference type="EMBL" id="AL353809">
    <property type="status" value="NOT_ANNOTATED_CDS"/>
    <property type="molecule type" value="Genomic_DNA"/>
</dbReference>
<dbReference type="EMBL" id="CH471067">
    <property type="protein sequence ID" value="EAW91274.1"/>
    <property type="molecule type" value="Genomic_DNA"/>
</dbReference>
<dbReference type="EMBL" id="BC015396">
    <property type="protein sequence ID" value="AAH15396.1"/>
    <property type="molecule type" value="mRNA"/>
</dbReference>
<dbReference type="EMBL" id="BC034607">
    <property type="protein sequence ID" value="AAH34607.1"/>
    <property type="status" value="ALT_INIT"/>
    <property type="molecule type" value="mRNA"/>
</dbReference>
<dbReference type="EMBL" id="AK001411">
    <property type="protein sequence ID" value="BAA91676.1"/>
    <property type="status" value="ALT_INIT"/>
    <property type="molecule type" value="mRNA"/>
</dbReference>
<dbReference type="CCDS" id="CCDS1389.1">
    <molecule id="Q8IZT6-1"/>
</dbReference>
<dbReference type="CCDS" id="CCDS55672.1">
    <molecule id="Q8IZT6-2"/>
</dbReference>
<dbReference type="RefSeq" id="NP_001193775.1">
    <molecule id="Q8IZT6-2"/>
    <property type="nucleotide sequence ID" value="NM_001206846.2"/>
</dbReference>
<dbReference type="RefSeq" id="NP_060606.3">
    <molecule id="Q8IZT6-1"/>
    <property type="nucleotide sequence ID" value="NM_018136.4"/>
</dbReference>
<dbReference type="SMR" id="Q8IZT6"/>
<dbReference type="BioGRID" id="129236">
    <property type="interactions" value="158"/>
</dbReference>
<dbReference type="FunCoup" id="Q8IZT6">
    <property type="interactions" value="1128"/>
</dbReference>
<dbReference type="IntAct" id="Q8IZT6">
    <property type="interactions" value="126"/>
</dbReference>
<dbReference type="STRING" id="9606.ENSP00000356379"/>
<dbReference type="CarbonylDB" id="Q8IZT6"/>
<dbReference type="GlyGen" id="Q8IZT6">
    <property type="glycosylation" value="3 sites, 1 O-linked glycan (3 sites)"/>
</dbReference>
<dbReference type="iPTMnet" id="Q8IZT6"/>
<dbReference type="PhosphoSitePlus" id="Q8IZT6"/>
<dbReference type="SwissPalm" id="Q8IZT6"/>
<dbReference type="BioMuta" id="ASPM"/>
<dbReference type="DMDM" id="215273935"/>
<dbReference type="jPOST" id="Q8IZT6"/>
<dbReference type="MassIVE" id="Q8IZT6"/>
<dbReference type="PaxDb" id="9606-ENSP00000356379"/>
<dbReference type="PeptideAtlas" id="Q8IZT6"/>
<dbReference type="ProteomicsDB" id="71424">
    <molecule id="Q8IZT6-1"/>
</dbReference>
<dbReference type="ProteomicsDB" id="71425">
    <molecule id="Q8IZT6-2"/>
</dbReference>
<dbReference type="Pumba" id="Q8IZT6"/>
<dbReference type="Antibodypedia" id="34476">
    <property type="antibodies" value="82 antibodies from 19 providers"/>
</dbReference>
<dbReference type="DNASU" id="259266"/>
<dbReference type="Ensembl" id="ENST00000294732.11">
    <molecule id="Q8IZT6-2"/>
    <property type="protein sequence ID" value="ENSP00000294732.7"/>
    <property type="gene ID" value="ENSG00000066279.19"/>
</dbReference>
<dbReference type="Ensembl" id="ENST00000367409.9">
    <molecule id="Q8IZT6-1"/>
    <property type="protein sequence ID" value="ENSP00000356379.4"/>
    <property type="gene ID" value="ENSG00000066279.19"/>
</dbReference>
<dbReference type="GeneID" id="259266"/>
<dbReference type="KEGG" id="hsa:259266"/>
<dbReference type="MANE-Select" id="ENST00000367409.9">
    <property type="protein sequence ID" value="ENSP00000356379.4"/>
    <property type="RefSeq nucleotide sequence ID" value="NM_018136.5"/>
    <property type="RefSeq protein sequence ID" value="NP_060606.3"/>
</dbReference>
<dbReference type="UCSC" id="uc001gtu.4">
    <molecule id="Q8IZT6-1"/>
    <property type="organism name" value="human"/>
</dbReference>
<dbReference type="AGR" id="HGNC:19048"/>
<dbReference type="CTD" id="259266"/>
<dbReference type="DisGeNET" id="259266"/>
<dbReference type="GeneCards" id="ASPM"/>
<dbReference type="GeneReviews" id="ASPM"/>
<dbReference type="HGNC" id="HGNC:19048">
    <property type="gene designation" value="ASPM"/>
</dbReference>
<dbReference type="HPA" id="ENSG00000066279">
    <property type="expression patterns" value="Group enriched (bone marrow, lymphoid tissue)"/>
</dbReference>
<dbReference type="MalaCards" id="ASPM"/>
<dbReference type="MIM" id="605481">
    <property type="type" value="gene"/>
</dbReference>
<dbReference type="MIM" id="608716">
    <property type="type" value="phenotype"/>
</dbReference>
<dbReference type="neXtProt" id="NX_Q8IZT6"/>
<dbReference type="OpenTargets" id="ENSG00000066279"/>
<dbReference type="Orphanet" id="2512">
    <property type="disease" value="Autosomal recessive primary microcephaly"/>
</dbReference>
<dbReference type="PharmGKB" id="PA38782"/>
<dbReference type="VEuPathDB" id="HostDB:ENSG00000066279"/>
<dbReference type="eggNOG" id="KOG0160">
    <property type="taxonomic scope" value="Eukaryota"/>
</dbReference>
<dbReference type="eggNOG" id="KOG0165">
    <property type="taxonomic scope" value="Eukaryota"/>
</dbReference>
<dbReference type="GeneTree" id="ENSGT00560000077332"/>
<dbReference type="HOGENOM" id="CLU_000237_0_0_1"/>
<dbReference type="InParanoid" id="Q8IZT6"/>
<dbReference type="OMA" id="QSHWRAT"/>
<dbReference type="OrthoDB" id="2148418at2759"/>
<dbReference type="PAN-GO" id="Q8IZT6">
    <property type="GO annotations" value="0 GO annotations based on evolutionary models"/>
</dbReference>
<dbReference type="PhylomeDB" id="Q8IZT6"/>
<dbReference type="TreeFam" id="TF351180"/>
<dbReference type="PathwayCommons" id="Q8IZT6"/>
<dbReference type="SignaLink" id="Q8IZT6"/>
<dbReference type="SIGNOR" id="Q8IZT6"/>
<dbReference type="BioGRID-ORCS" id="259266">
    <property type="hits" value="117 hits in 1176 CRISPR screens"/>
</dbReference>
<dbReference type="CD-CODE" id="8C2F96ED">
    <property type="entry name" value="Centrosome"/>
</dbReference>
<dbReference type="ChiTaRS" id="ASPM">
    <property type="organism name" value="human"/>
</dbReference>
<dbReference type="GeneWiki" id="ASPM_(gene)"/>
<dbReference type="GenomeRNAi" id="259266"/>
<dbReference type="Pharos" id="Q8IZT6">
    <property type="development level" value="Tbio"/>
</dbReference>
<dbReference type="PRO" id="PR:Q8IZT6"/>
<dbReference type="Proteomes" id="UP000005640">
    <property type="component" value="Chromosome 1"/>
</dbReference>
<dbReference type="RNAct" id="Q8IZT6">
    <property type="molecule type" value="protein"/>
</dbReference>
<dbReference type="Bgee" id="ENSG00000066279">
    <property type="expression patterns" value="Expressed in oocyte and 115 other cell types or tissues"/>
</dbReference>
<dbReference type="GO" id="GO:0016324">
    <property type="term" value="C:apical plasma membrane"/>
    <property type="evidence" value="ECO:0007669"/>
    <property type="project" value="Ensembl"/>
</dbReference>
<dbReference type="GO" id="GO:0005813">
    <property type="term" value="C:centrosome"/>
    <property type="evidence" value="ECO:0007669"/>
    <property type="project" value="Ensembl"/>
</dbReference>
<dbReference type="GO" id="GO:0005737">
    <property type="term" value="C:cytoplasm"/>
    <property type="evidence" value="ECO:0007669"/>
    <property type="project" value="UniProtKB-SubCell"/>
</dbReference>
<dbReference type="GO" id="GO:0072687">
    <property type="term" value="C:meiotic spindle"/>
    <property type="evidence" value="ECO:0007669"/>
    <property type="project" value="Ensembl"/>
</dbReference>
<dbReference type="GO" id="GO:0036449">
    <property type="term" value="C:microtubule minus-end"/>
    <property type="evidence" value="ECO:0000314"/>
    <property type="project" value="HGNC"/>
</dbReference>
<dbReference type="GO" id="GO:0030496">
    <property type="term" value="C:midbody"/>
    <property type="evidence" value="ECO:0007669"/>
    <property type="project" value="Ensembl"/>
</dbReference>
<dbReference type="GO" id="GO:0097431">
    <property type="term" value="C:mitotic spindle pole"/>
    <property type="evidence" value="ECO:0000314"/>
    <property type="project" value="HGNC"/>
</dbReference>
<dbReference type="GO" id="GO:0005634">
    <property type="term" value="C:nucleus"/>
    <property type="evidence" value="ECO:0000314"/>
    <property type="project" value="HGNC"/>
</dbReference>
<dbReference type="GO" id="GO:0005516">
    <property type="term" value="F:calmodulin binding"/>
    <property type="evidence" value="ECO:0007669"/>
    <property type="project" value="UniProtKB-KW"/>
</dbReference>
<dbReference type="GO" id="GO:0008356">
    <property type="term" value="P:asymmetric cell division"/>
    <property type="evidence" value="ECO:0007669"/>
    <property type="project" value="Ensembl"/>
</dbReference>
<dbReference type="GO" id="GO:0021987">
    <property type="term" value="P:cerebral cortex development"/>
    <property type="evidence" value="ECO:0007669"/>
    <property type="project" value="Ensembl"/>
</dbReference>
<dbReference type="GO" id="GO:0048589">
    <property type="term" value="P:developmental growth"/>
    <property type="evidence" value="ECO:0007669"/>
    <property type="project" value="Ensembl"/>
</dbReference>
<dbReference type="GO" id="GO:0021873">
    <property type="term" value="P:forebrain neuroblast division"/>
    <property type="evidence" value="ECO:0007669"/>
    <property type="project" value="Ensembl"/>
</dbReference>
<dbReference type="GO" id="GO:0051661">
    <property type="term" value="P:maintenance of centrosome location"/>
    <property type="evidence" value="ECO:0007669"/>
    <property type="project" value="Ensembl"/>
</dbReference>
<dbReference type="GO" id="GO:0008584">
    <property type="term" value="P:male gonad development"/>
    <property type="evidence" value="ECO:0007669"/>
    <property type="project" value="Ensembl"/>
</dbReference>
<dbReference type="GO" id="GO:0090306">
    <property type="term" value="P:meiotic spindle assembly"/>
    <property type="evidence" value="ECO:0007669"/>
    <property type="project" value="Ensembl"/>
</dbReference>
<dbReference type="GO" id="GO:0045769">
    <property type="term" value="P:negative regulation of asymmetric cell division"/>
    <property type="evidence" value="ECO:0007669"/>
    <property type="project" value="Ensembl"/>
</dbReference>
<dbReference type="GO" id="GO:0045665">
    <property type="term" value="P:negative regulation of neuron differentiation"/>
    <property type="evidence" value="ECO:0007669"/>
    <property type="project" value="Ensembl"/>
</dbReference>
<dbReference type="GO" id="GO:0001764">
    <property type="term" value="P:neuron migration"/>
    <property type="evidence" value="ECO:0007669"/>
    <property type="project" value="Ensembl"/>
</dbReference>
<dbReference type="GO" id="GO:0097150">
    <property type="term" value="P:neuronal stem cell population maintenance"/>
    <property type="evidence" value="ECO:0007669"/>
    <property type="project" value="Ensembl"/>
</dbReference>
<dbReference type="GO" id="GO:0048477">
    <property type="term" value="P:oogenesis"/>
    <property type="evidence" value="ECO:0007669"/>
    <property type="project" value="Ensembl"/>
</dbReference>
<dbReference type="GO" id="GO:0090263">
    <property type="term" value="P:positive regulation of canonical Wnt signaling pathway"/>
    <property type="evidence" value="ECO:0007669"/>
    <property type="project" value="Ensembl"/>
</dbReference>
<dbReference type="GO" id="GO:0002052">
    <property type="term" value="P:positive regulation of neuroblast proliferation"/>
    <property type="evidence" value="ECO:0007669"/>
    <property type="project" value="Ensembl"/>
</dbReference>
<dbReference type="GO" id="GO:0051445">
    <property type="term" value="P:regulation of meiotic cell cycle"/>
    <property type="evidence" value="ECO:0007669"/>
    <property type="project" value="Ensembl"/>
</dbReference>
<dbReference type="GO" id="GO:0007283">
    <property type="term" value="P:spermatogenesis"/>
    <property type="evidence" value="ECO:0007669"/>
    <property type="project" value="Ensembl"/>
</dbReference>
<dbReference type="GO" id="GO:0051653">
    <property type="term" value="P:spindle localization"/>
    <property type="evidence" value="ECO:0000315"/>
    <property type="project" value="HGNC"/>
</dbReference>
<dbReference type="GO" id="GO:0007051">
    <property type="term" value="P:spindle organization"/>
    <property type="evidence" value="ECO:0000315"/>
    <property type="project" value="HGNC"/>
</dbReference>
<dbReference type="CDD" id="cd21223">
    <property type="entry name" value="CH_ASPM_rpt1"/>
    <property type="match status" value="1"/>
</dbReference>
<dbReference type="CDD" id="cd21224">
    <property type="entry name" value="CH_ASPM_rpt2"/>
    <property type="match status" value="1"/>
</dbReference>
<dbReference type="FunFam" id="1.20.5.190:FF:000052">
    <property type="entry name" value="Abnormal spindle-like microcephaly-associated protein"/>
    <property type="match status" value="1"/>
</dbReference>
<dbReference type="FunFam" id="1.10.418.10:FF:000051">
    <property type="entry name" value="Abnormal spindle-like microcephaly-associated protein homolog"/>
    <property type="match status" value="1"/>
</dbReference>
<dbReference type="FunFam" id="1.20.5.190:FF:000008">
    <property type="entry name" value="Abnormal spindle-like microcephaly-associated protein homolog"/>
    <property type="match status" value="5"/>
</dbReference>
<dbReference type="FunFam" id="1.20.5.190:FF:000009">
    <property type="entry name" value="Abnormal spindle-like microcephaly-associated protein homolog"/>
    <property type="match status" value="4"/>
</dbReference>
<dbReference type="FunFam" id="1.20.5.190:FF:000010">
    <property type="entry name" value="Abnormal spindle-like microcephaly-associated protein homolog"/>
    <property type="match status" value="2"/>
</dbReference>
<dbReference type="FunFam" id="1.20.5.190:FF:000016">
    <property type="entry name" value="Abnormal spindle-like microcephaly-associated protein homolog"/>
    <property type="match status" value="1"/>
</dbReference>
<dbReference type="FunFam" id="1.20.5.190:FF:000023">
    <property type="entry name" value="Abnormal spindle-like microcephaly-associated protein homolog"/>
    <property type="match status" value="1"/>
</dbReference>
<dbReference type="FunFam" id="1.20.5.190:FF:000028">
    <property type="entry name" value="Abnormal spindle-like microcephaly-associated protein homolog"/>
    <property type="match status" value="1"/>
</dbReference>
<dbReference type="FunFam" id="1.20.5.190:FF:000029">
    <property type="entry name" value="Abnormal spindle-like microcephaly-associated protein homolog"/>
    <property type="match status" value="1"/>
</dbReference>
<dbReference type="FunFam" id="1.20.5.190:FF:000030">
    <property type="entry name" value="Abnormal spindle-like microcephaly-associated protein homolog"/>
    <property type="match status" value="1"/>
</dbReference>
<dbReference type="FunFam" id="1.20.5.190:FF:000031">
    <property type="entry name" value="Abnormal spindle-like microcephaly-associated protein homolog"/>
    <property type="match status" value="1"/>
</dbReference>
<dbReference type="FunFam" id="1.20.5.190:FF:000032">
    <property type="entry name" value="Abnormal spindle-like microcephaly-associated protein homolog"/>
    <property type="match status" value="1"/>
</dbReference>
<dbReference type="FunFam" id="1.20.5.190:FF:000034">
    <property type="entry name" value="Abnormal spindle-like microcephaly-associated protein homolog"/>
    <property type="match status" value="1"/>
</dbReference>
<dbReference type="FunFam" id="1.20.5.190:FF:000035">
    <property type="entry name" value="Abnormal spindle-like microcephaly-associated protein homolog"/>
    <property type="match status" value="1"/>
</dbReference>
<dbReference type="FunFam" id="1.20.5.190:FF:000046">
    <property type="entry name" value="Abnormal spindle-like microcephaly-associated protein homolog"/>
    <property type="match status" value="1"/>
</dbReference>
<dbReference type="FunFam" id="1.20.5.190:FF:000053">
    <property type="entry name" value="Abnormal spindle-like microcephaly-associated protein homolog"/>
    <property type="match status" value="1"/>
</dbReference>
<dbReference type="FunFam" id="1.20.5.190:FF:000059">
    <property type="entry name" value="Abnormal spindle-like microcephaly-associated protein homolog"/>
    <property type="match status" value="1"/>
</dbReference>
<dbReference type="FunFam" id="2.60.40.10:FF:001429">
    <property type="entry name" value="Abnormal spindle-like microcephaly-associated protein homolog"/>
    <property type="match status" value="1"/>
</dbReference>
<dbReference type="Gene3D" id="1.20.5.190">
    <property type="match status" value="31"/>
</dbReference>
<dbReference type="Gene3D" id="1.10.418.10">
    <property type="entry name" value="Calponin-like domain"/>
    <property type="match status" value="2"/>
</dbReference>
<dbReference type="Gene3D" id="2.60.40.10">
    <property type="entry name" value="Immunoglobulins"/>
    <property type="match status" value="1"/>
</dbReference>
<dbReference type="Gene3D" id="1.25.10.10">
    <property type="entry name" value="Leucine-rich Repeat Variant"/>
    <property type="match status" value="1"/>
</dbReference>
<dbReference type="InterPro" id="IPR011989">
    <property type="entry name" value="ARM-like"/>
</dbReference>
<dbReference type="InterPro" id="IPR016024">
    <property type="entry name" value="ARM-type_fold"/>
</dbReference>
<dbReference type="InterPro" id="IPR031549">
    <property type="entry name" value="ASH"/>
</dbReference>
<dbReference type="InterPro" id="IPR051185">
    <property type="entry name" value="ASPM"/>
</dbReference>
<dbReference type="InterPro" id="IPR001715">
    <property type="entry name" value="CH_dom"/>
</dbReference>
<dbReference type="InterPro" id="IPR036872">
    <property type="entry name" value="CH_dom_sf"/>
</dbReference>
<dbReference type="InterPro" id="IPR013783">
    <property type="entry name" value="Ig-like_fold"/>
</dbReference>
<dbReference type="InterPro" id="IPR000048">
    <property type="entry name" value="IQ_motif_EF-hand-BS"/>
</dbReference>
<dbReference type="InterPro" id="IPR027417">
    <property type="entry name" value="P-loop_NTPase"/>
</dbReference>
<dbReference type="PANTHER" id="PTHR22706">
    <property type="entry name" value="ASSEMBLY FACTOR FOR SPINDLE MICROTUBULES"/>
    <property type="match status" value="1"/>
</dbReference>
<dbReference type="PANTHER" id="PTHR22706:SF1">
    <property type="entry name" value="ASSEMBLY FACTOR FOR SPINDLE MICROTUBULES"/>
    <property type="match status" value="1"/>
</dbReference>
<dbReference type="Pfam" id="PF15780">
    <property type="entry name" value="ASH"/>
    <property type="match status" value="1"/>
</dbReference>
<dbReference type="Pfam" id="PF00307">
    <property type="entry name" value="CH"/>
    <property type="match status" value="1"/>
</dbReference>
<dbReference type="Pfam" id="PF00612">
    <property type="entry name" value="IQ"/>
    <property type="match status" value="39"/>
</dbReference>
<dbReference type="SMART" id="SM00033">
    <property type="entry name" value="CH"/>
    <property type="match status" value="2"/>
</dbReference>
<dbReference type="SMART" id="SM00015">
    <property type="entry name" value="IQ"/>
    <property type="match status" value="63"/>
</dbReference>
<dbReference type="SUPFAM" id="SSF48371">
    <property type="entry name" value="ARM repeat"/>
    <property type="match status" value="1"/>
</dbReference>
<dbReference type="SUPFAM" id="SSF47576">
    <property type="entry name" value="Calponin-homology domain, CH-domain"/>
    <property type="match status" value="1"/>
</dbReference>
<dbReference type="SUPFAM" id="SSF52540">
    <property type="entry name" value="P-loop containing nucleoside triphosphate hydrolases"/>
    <property type="match status" value="18"/>
</dbReference>
<dbReference type="PROSITE" id="PS50021">
    <property type="entry name" value="CH"/>
    <property type="match status" value="2"/>
</dbReference>
<dbReference type="PROSITE" id="PS50096">
    <property type="entry name" value="IQ"/>
    <property type="match status" value="39"/>
</dbReference>
<sequence length="3477" mass="409800">MANRRVGRGCWEVSPTERRPPAGLRGPAAEEEASSPPVLSLSHFCRSPFLCFGDVLLGASRTLSLALDNPNEEVAEVKISHFPAADLGFSVSQRCFVLQPKEKIVISVNWTPLKEGRVREIMTFLVNDVLKHQAILLGNAEEQKKKKRSLWDTIKKKKISASTSHNRRVSNIQNVNKTFSVSQKVDRVRSPLQACENLAMNEGGPPTENNSLILEENKIPISPISPAFNECHGATCLPLSVRRSTTYSSLHASENRELLNVHSANVSKVSFNEKAVTETSFNSVNVNGQRGENSKLSLTPNCSSTLNITQSQIHFLSPDSFVNNSHGANNELELVTCLSSDMFMKDNSQPVHLESTIAHEIYQKILSPDSFIKDNYGLNQDLESESVNPILSPNQFLKDNMAYMCTSQQTCKVPLSNENSQVPQSPEDWRKSEVSPRIPECQGSKSPKAIFEELVEMKSNYYSFIKQNNPKFSAVQDISSHSHNKQPKRRPILSATVTKRKATCTRENQTEINKPKAKRCLNSAVGEHEKVINNQKEKEDFHSYLPIIDPILSKSKSYKNEVTPSSTTASVARKRKSDGSMEDANVRVAITEHTEVREIKRIHFSPSEPKTSAVKKTKNVTTPISKRISNREKLNLKKKTDLSIFRTPISKTNKRTKPIIAVAQSSLTFIKPLKTDIPRHPMPFAAKNMFYDERWKEKQEQGFTWWLNFILTPDDFTVKTNISEVNAATLLLGIENQHKISVPRAPTKEEMSLRAYTARCRLNRLRRAACRLFTSEKMVKAIKKLEIEIEARRLIVRKDRHLWKDVGERQKVLNWLLSYNPLWLRIGLETTYGELISLEDNSDVTGLAMFILNRLLWNPDIAAEYRHPTVPHLYRDGHEEALSKFTLKKLLLLVCFLDYAKISRLIDHDPCLFCKDAEFKASKEILLAFSRDFLSGEGDLSRHLGLLGLPVNHVQTPFDEFDFAVTNLAVDLQCGVRLVRTMELLTQNWDLSKKLRIPAISRLQKMHNVDIVLQVLKSRGIELSDEHGNTILSKDIVDRHREKTLRLLWKIAFAFQVDISLNLDQLKEEIAFLKHTKSIKKTISLLSCHSDDLINKKKGKRDSGSFEQYSENIKLLMDWVNAVCAFYNKKVENFTVSFSDGRVLCYLIHHYHPCYVPFDAICQRTTQTVECTQTGSVVLNSSSESDDSSLDMSLKAFDHENTSELYKELLENEKKNFHLVRSAVRDLGGIPAMINHSDMSNTIPDEKVVITYLSFLCARLLDLRKEIRAARLIQTTWRKYKLKTDLKRHQEREKAARIIQLAVINFLAKQRLRKRVNAALVIQKYWRRVLAQRKLLMLKKEKLEKVQNKAASLIQGYWRRYSTRQRFLKLKYYSIILQSRIRMIIAVTSYKRYLWATVTIQRHWRAYLRRKQDQQRYEMLKSSTLIIQSMFRKWKQRKMQSQVKATVILQRAFREWHLRKQAKEENSAIIIQSWYRMHKELRKYIYIRSCVVIIQKRFRCFQAQKLYKRRKESILTIQKYYKAYLKGKIERTNYLQKRAAAIQLQAAFRRLKAHNLCRQIRAACVIQSYWRMRQDRVRFLNLKKTIIKFQAHVRKHQQRQKYKKMKKAAVIIQTHFRAYIFAMKVLASYQKTRSAVIVLQSAYRGMQARKMYIHILTSVIKIQSYYRAYVSKKEFLSLKNATIKLQSTVKMKQTRKQYLHLRAAALFIQQCYRSKKIAAQKREEYMQMRESCIKLQAFVRGYLVRKQMRLQRKAVISLQSYFRMRKARQYYLKMYKAIIVIQNYYHAYKAQVNQRKNFLQVKKAATCLQAAYRGYKVRQLIKQQSIAALKIQSAFRGYNKRVKYQSVLQSIIKIQRWYRAYKTLHDTRTHFLKTKAAVISLQSAYRGWKVRKQIRREHQAALKIQSAFRMAKAQKQFRLFKTAALVIQQNFRAWTAGRKQCMEYIELRHAVLVLQSMWKGKTLRRQLQRQHKCAIIIQSYYRMHVQQKKWKIMKKAALLIQKYYRAYSIGREQNHLYLKTKAAVVTLQSAYRGMKVRKRIKDCNKAAVTIQSKYRAYKTKKKYATYRASAIIIQRWYRGIKITNHQHKEYLNLKKTAIKIQSVYRGIRVRRHIQHMHRAATFIKAMFKMHQSRISYHTMRKAAIVIQVRCRAYYQGKMQREKYLTILKAVKVLQASFRGVRVRRTLRKMQTAATLIQSNYRRYRQQTYFNKLKKITKTVQQRYWAMKERNIQFQRYNKLRHSVIYIQAIFRGKKARRHLKMMHIAATLIQRRFRTLMMRRRFLSLKKTAILIQRKYRAHLCTKHHLQFLQVQNAVIKIQSSYRRWMIRKRMREMHRAATFIQSTFRMHRLHMRYQALKQASVVIQQQYQANRAAKLQRQHYLRQRHSAVILQAAFRGMKTRRHLKSMHSSATLIQSRFRSLLVRRRFISLKKATIFVQRKYRATICAKHKLYQFLHLRKAAITIQSSYRRLMVKKKLQEMQRAAVLIQATFRMYRTYITFQTWKHASILIQQHYRTYRAAKLQRENYIRQWHSAVVIQAAYKGMKARQLLREKHKASIVIQSTYRMYRQYCFYQKLQWATKIIQEKYRANKKKQKVFQHNELKKETCVQAGFQDMNIKKQIQEQHQAAIIIQKHCKAFKIRKHYLHLRATVVSIQRRYRKLTAVRTQAVICIQSYYRGFKVRKDIQNMHRAATLIQSFYRMHRAKVDYETKKTAIVVIQNYYRLYVRVKTERKNFLAVQKSVRTIQAAFRGMKVRQKLKNVSEEKMAAIVNQSALCCYRSKTQYEAVQSEGVMIQEWYKASGLACSQEAEYHSQSRAAVTIQKAFCRMVTRKLETQKCAALRIQFFLQMAVYRRRFVQQKRAAITLQHYFRTWQTRKQFLLYRKAAVVLQNHYRAFLSAKHQRQVYLQIRSSVIIIQARSKGFIQKRKFQEIKNSTIKIQAMWRRYRAKKYLCKVKAACKIQAWYRCWRAHKEYLAILKAVKIIQGCFYTKLERTRFLNVRASAIIIQRKWRAILPAKIAHEHFLMIKRHRAACLIQAHYRGYKGRQVFLRQKSAALIIQKYIRAREAGKHERIKYIEFKKSTVILQALVRGWLVRKRFLEQRAKIRLLHFTAAAYYHLNAVRIQRAYKLYLAVKNANKQVNSVICIQRWFRARLQEKRFIQKYHSIKKIEHEGQECLSQRNRAASVIQKAVRHFLLRKKQEKFTSGIIKIQALWRGYSWRKKNDCTKIKAIRLSLQVVNREIREENKLYKRTALALHYLLTYKHLSAILEALKHLEVVTRLSPLCCENMAQSGAISKIFVLIRSCNRSIPCMEVIRYAVQVLLNVSKYEKTTSAVYDVENCIDILLELLQIYREKPGNKVADKGGSIFTKTCCLLAILLKTTNRASDVRSRSKVVDRIYSLYKLTAHKHKMNTERILYKQKKNSSISIPFIPETPVRTRIVSRLKPDWVLRRDNMEEITNPLQAIQMVMDTLGIPY</sequence>
<organism>
    <name type="scientific">Homo sapiens</name>
    <name type="common">Human</name>
    <dbReference type="NCBI Taxonomy" id="9606"/>
    <lineage>
        <taxon>Eukaryota</taxon>
        <taxon>Metazoa</taxon>
        <taxon>Chordata</taxon>
        <taxon>Craniata</taxon>
        <taxon>Vertebrata</taxon>
        <taxon>Euteleostomi</taxon>
        <taxon>Mammalia</taxon>
        <taxon>Eutheria</taxon>
        <taxon>Euarchontoglires</taxon>
        <taxon>Primates</taxon>
        <taxon>Haplorrhini</taxon>
        <taxon>Catarrhini</taxon>
        <taxon>Hominidae</taxon>
        <taxon>Homo</taxon>
    </lineage>
</organism>
<protein>
    <recommendedName>
        <fullName>Abnormal spindle-like microcephaly-associated protein</fullName>
    </recommendedName>
    <alternativeName>
        <fullName>Abnormal spindle protein homolog</fullName>
        <shortName>Asp homolog</shortName>
    </alternativeName>
</protein>
<name>ASPM_HUMAN</name>
<gene>
    <name type="primary">ASPM</name>
    <name type="synonym">MCPH5</name>
</gene>
<accession>Q8IZT6</accession>
<accession>Q4G1H1</accession>
<accession>Q5VYL3</accession>
<accession>Q86UX4</accession>
<accession>Q8IUL2</accession>
<accession>Q8IZJ7</accession>
<accession>Q8IZJ8</accession>
<accession>Q8IZJ9</accession>
<accession>Q8N4D1</accession>
<accession>Q9NVS1</accession>
<accession>Q9NVT6</accession>
<comment type="function">
    <text evidence="7 11 16">Involved in mitotic spindle regulation and coordination of mitotic processes. The function in regulating microtubule dynamics at spindle poles including spindle orientation, astral microtubule density and poleward microtubule flux seems to depend on the association with the katanin complex formed by KATNA1 and KATNB1. Enhances the microtubule lattice severing activity of KATNA1 by recruiting the katanin complex to microtubules. Can block microtubule minus-end growth and reversely this function can be enhanced by the katanin complex (PubMed:28436967). May have a preferential role in regulating neurogenesis.</text>
</comment>
<comment type="subunit">
    <text evidence="16">Interacts with KATNA1 and KATNB1; katanin complex formation KATNA1:KATNB1 is required for the association.</text>
</comment>
<comment type="subcellular location">
    <subcellularLocation>
        <location evidence="1">Cytoplasm</location>
    </subcellularLocation>
    <subcellularLocation>
        <location evidence="11">Cytoplasm</location>
        <location evidence="11">Cytoskeleton</location>
        <location evidence="11">Spindle</location>
    </subcellularLocation>
    <subcellularLocation>
        <location evidence="1">Nucleus</location>
    </subcellularLocation>
    <text evidence="2">The nuclear-cytoplasmic distribution could be regulated by the availability of calmodulin (By similarity). Localizes to spindle poles during mitosis (PubMed:19690332). Associates with microtubule minus ends (By similarity).</text>
</comment>
<comment type="alternative products">
    <event type="alternative splicing"/>
    <isoform>
        <id>Q8IZT6-1</id>
        <name>1</name>
        <sequence type="displayed"/>
    </isoform>
    <isoform>
        <id>Q8IZT6-2</id>
        <name>2</name>
        <sequence type="described" ref="VSP_010680"/>
    </isoform>
</comment>
<comment type="disease" evidence="7 8 14">
    <disease id="DI-00752">
        <name>Microcephaly 5, primary, autosomal recessive</name>
        <acronym>MCPH5</acronym>
        <description>A disease defined as a head circumference more than 3 standard deviations below the age-related mean. Brain weight is markedly reduced and the cerebral cortex is disproportionately small. Despite this marked reduction in size, the gyral pattern is relatively well preserved, with no major abnormality in cortical architecture. Affected individuals have mild to severe intellectual disability. Primary microcephaly is further defined by the absence of other syndromic features or significant neurological deficits due to degenerative brain disorder.</description>
        <dbReference type="MIM" id="608716"/>
    </disease>
    <text>The disease is caused by variants affecting the gene represented in this entry.</text>
</comment>
<comment type="sequence caution" evidence="19">
    <conflict type="erroneous initiation">
        <sequence resource="EMBL-CDS" id="AAH34607"/>
    </conflict>
</comment>
<comment type="sequence caution" evidence="19">
    <conflict type="erroneous initiation">
        <sequence resource="EMBL-CDS" id="BAA91676"/>
    </conflict>
</comment>
<comment type="online information" name="Atlas of Genetics and Cytogenetics in Oncology and Haematology">
    <link uri="https://atlasgeneticsoncology.org/gene/44463/ASPM"/>
</comment>